<accession>C3PBN0</accession>
<feature type="chain" id="PRO_1000134892" description="Phosphoribosylformylglycinamidine synthase subunit PurL">
    <location>
        <begin position="1"/>
        <end position="739"/>
    </location>
</feature>
<feature type="active site" evidence="1">
    <location>
        <position position="54"/>
    </location>
</feature>
<feature type="active site" description="Proton acceptor" evidence="1">
    <location>
        <position position="100"/>
    </location>
</feature>
<feature type="binding site" evidence="1">
    <location>
        <position position="57"/>
    </location>
    <ligand>
        <name>ATP</name>
        <dbReference type="ChEBI" id="CHEBI:30616"/>
    </ligand>
</feature>
<feature type="binding site" evidence="1">
    <location>
        <position position="96"/>
    </location>
    <ligand>
        <name>ATP</name>
        <dbReference type="ChEBI" id="CHEBI:30616"/>
    </ligand>
</feature>
<feature type="binding site" evidence="1">
    <location>
        <position position="98"/>
    </location>
    <ligand>
        <name>Mg(2+)</name>
        <dbReference type="ChEBI" id="CHEBI:18420"/>
        <label>1</label>
    </ligand>
</feature>
<feature type="binding site" evidence="1">
    <location>
        <begin position="99"/>
        <end position="102"/>
    </location>
    <ligand>
        <name>substrate</name>
    </ligand>
</feature>
<feature type="binding site" evidence="1">
    <location>
        <position position="121"/>
    </location>
    <ligand>
        <name>substrate</name>
    </ligand>
</feature>
<feature type="binding site" evidence="1">
    <location>
        <position position="122"/>
    </location>
    <ligand>
        <name>Mg(2+)</name>
        <dbReference type="ChEBI" id="CHEBI:18420"/>
        <label>2</label>
    </ligand>
</feature>
<feature type="binding site" evidence="1">
    <location>
        <position position="245"/>
    </location>
    <ligand>
        <name>substrate</name>
    </ligand>
</feature>
<feature type="binding site" evidence="1">
    <location>
        <position position="273"/>
    </location>
    <ligand>
        <name>Mg(2+)</name>
        <dbReference type="ChEBI" id="CHEBI:18420"/>
        <label>2</label>
    </ligand>
</feature>
<feature type="binding site" evidence="1">
    <location>
        <begin position="317"/>
        <end position="319"/>
    </location>
    <ligand>
        <name>substrate</name>
    </ligand>
</feature>
<feature type="binding site" evidence="1">
    <location>
        <position position="500"/>
    </location>
    <ligand>
        <name>ATP</name>
        <dbReference type="ChEBI" id="CHEBI:30616"/>
    </ligand>
</feature>
<feature type="binding site" evidence="1">
    <location>
        <position position="537"/>
    </location>
    <ligand>
        <name>ATP</name>
        <dbReference type="ChEBI" id="CHEBI:30616"/>
    </ligand>
</feature>
<feature type="binding site" evidence="1">
    <location>
        <position position="538"/>
    </location>
    <ligand>
        <name>Mg(2+)</name>
        <dbReference type="ChEBI" id="CHEBI:18420"/>
        <label>1</label>
    </ligand>
</feature>
<feature type="binding site" evidence="1">
    <location>
        <position position="540"/>
    </location>
    <ligand>
        <name>substrate</name>
    </ligand>
</feature>
<gene>
    <name evidence="1" type="primary">purL</name>
    <name type="ordered locus">BAA_0349</name>
</gene>
<evidence type="ECO:0000255" key="1">
    <source>
        <dbReference type="HAMAP-Rule" id="MF_00420"/>
    </source>
</evidence>
<keyword id="KW-0067">ATP-binding</keyword>
<keyword id="KW-0963">Cytoplasm</keyword>
<keyword id="KW-0436">Ligase</keyword>
<keyword id="KW-0460">Magnesium</keyword>
<keyword id="KW-0479">Metal-binding</keyword>
<keyword id="KW-0547">Nucleotide-binding</keyword>
<keyword id="KW-0658">Purine biosynthesis</keyword>
<dbReference type="EC" id="6.3.5.3" evidence="1"/>
<dbReference type="EMBL" id="CP001598">
    <property type="protein sequence ID" value="ACQ48285.1"/>
    <property type="molecule type" value="Genomic_DNA"/>
</dbReference>
<dbReference type="RefSeq" id="WP_000055577.1">
    <property type="nucleotide sequence ID" value="NC_012659.1"/>
</dbReference>
<dbReference type="SMR" id="C3PBN0"/>
<dbReference type="GeneID" id="45020353"/>
<dbReference type="KEGG" id="bai:BAA_0349"/>
<dbReference type="HOGENOM" id="CLU_003100_0_1_9"/>
<dbReference type="UniPathway" id="UPA00074">
    <property type="reaction ID" value="UER00128"/>
</dbReference>
<dbReference type="GO" id="GO:0005737">
    <property type="term" value="C:cytoplasm"/>
    <property type="evidence" value="ECO:0007669"/>
    <property type="project" value="UniProtKB-SubCell"/>
</dbReference>
<dbReference type="GO" id="GO:0005524">
    <property type="term" value="F:ATP binding"/>
    <property type="evidence" value="ECO:0007669"/>
    <property type="project" value="UniProtKB-UniRule"/>
</dbReference>
<dbReference type="GO" id="GO:0000287">
    <property type="term" value="F:magnesium ion binding"/>
    <property type="evidence" value="ECO:0007669"/>
    <property type="project" value="UniProtKB-UniRule"/>
</dbReference>
<dbReference type="GO" id="GO:0004642">
    <property type="term" value="F:phosphoribosylformylglycinamidine synthase activity"/>
    <property type="evidence" value="ECO:0007669"/>
    <property type="project" value="UniProtKB-UniRule"/>
</dbReference>
<dbReference type="GO" id="GO:0006189">
    <property type="term" value="P:'de novo' IMP biosynthetic process"/>
    <property type="evidence" value="ECO:0007669"/>
    <property type="project" value="UniProtKB-UniRule"/>
</dbReference>
<dbReference type="CDD" id="cd02203">
    <property type="entry name" value="PurL_repeat1"/>
    <property type="match status" value="1"/>
</dbReference>
<dbReference type="CDD" id="cd02204">
    <property type="entry name" value="PurL_repeat2"/>
    <property type="match status" value="1"/>
</dbReference>
<dbReference type="FunFam" id="3.30.1330.10:FF:000004">
    <property type="entry name" value="Phosphoribosylformylglycinamidine synthase subunit PurL"/>
    <property type="match status" value="1"/>
</dbReference>
<dbReference type="FunFam" id="3.30.1330.10:FF:000011">
    <property type="entry name" value="Phosphoribosylformylglycinamidine synthase subunit PurL"/>
    <property type="match status" value="1"/>
</dbReference>
<dbReference type="FunFam" id="3.90.650.10:FF:000009">
    <property type="entry name" value="Phosphoribosylformylglycinamidine synthase subunit PurL"/>
    <property type="match status" value="1"/>
</dbReference>
<dbReference type="FunFam" id="3.90.650.10:FF:000013">
    <property type="entry name" value="Phosphoribosylformylglycinamidine synthase subunit PurL"/>
    <property type="match status" value="1"/>
</dbReference>
<dbReference type="Gene3D" id="3.90.650.10">
    <property type="entry name" value="PurM-like C-terminal domain"/>
    <property type="match status" value="2"/>
</dbReference>
<dbReference type="Gene3D" id="3.30.1330.10">
    <property type="entry name" value="PurM-like, N-terminal domain"/>
    <property type="match status" value="2"/>
</dbReference>
<dbReference type="HAMAP" id="MF_00420">
    <property type="entry name" value="PurL_2"/>
    <property type="match status" value="1"/>
</dbReference>
<dbReference type="InterPro" id="IPR010074">
    <property type="entry name" value="PRibForGlyAmidine_synth_PurL"/>
</dbReference>
<dbReference type="InterPro" id="IPR041609">
    <property type="entry name" value="PurL_linker"/>
</dbReference>
<dbReference type="InterPro" id="IPR010918">
    <property type="entry name" value="PurM-like_C_dom"/>
</dbReference>
<dbReference type="InterPro" id="IPR036676">
    <property type="entry name" value="PurM-like_C_sf"/>
</dbReference>
<dbReference type="InterPro" id="IPR016188">
    <property type="entry name" value="PurM-like_N"/>
</dbReference>
<dbReference type="InterPro" id="IPR036921">
    <property type="entry name" value="PurM-like_N_sf"/>
</dbReference>
<dbReference type="NCBIfam" id="TIGR01736">
    <property type="entry name" value="FGAM_synth_II"/>
    <property type="match status" value="1"/>
</dbReference>
<dbReference type="NCBIfam" id="NF002290">
    <property type="entry name" value="PRK01213.1"/>
    <property type="match status" value="1"/>
</dbReference>
<dbReference type="PANTHER" id="PTHR43555">
    <property type="entry name" value="PHOSPHORIBOSYLFORMYLGLYCINAMIDINE SYNTHASE SUBUNIT PURL"/>
    <property type="match status" value="1"/>
</dbReference>
<dbReference type="PANTHER" id="PTHR43555:SF1">
    <property type="entry name" value="PHOSPHORIBOSYLFORMYLGLYCINAMIDINE SYNTHASE SUBUNIT PURL"/>
    <property type="match status" value="1"/>
</dbReference>
<dbReference type="Pfam" id="PF00586">
    <property type="entry name" value="AIRS"/>
    <property type="match status" value="2"/>
</dbReference>
<dbReference type="Pfam" id="PF02769">
    <property type="entry name" value="AIRS_C"/>
    <property type="match status" value="2"/>
</dbReference>
<dbReference type="Pfam" id="PF18072">
    <property type="entry name" value="FGAR-AT_linker"/>
    <property type="match status" value="1"/>
</dbReference>
<dbReference type="PIRSF" id="PIRSF001587">
    <property type="entry name" value="FGAM_synthase_II"/>
    <property type="match status" value="1"/>
</dbReference>
<dbReference type="SUPFAM" id="SSF56042">
    <property type="entry name" value="PurM C-terminal domain-like"/>
    <property type="match status" value="2"/>
</dbReference>
<dbReference type="SUPFAM" id="SSF55326">
    <property type="entry name" value="PurM N-terminal domain-like"/>
    <property type="match status" value="2"/>
</dbReference>
<protein>
    <recommendedName>
        <fullName evidence="1">Phosphoribosylformylglycinamidine synthase subunit PurL</fullName>
        <shortName evidence="1">FGAM synthase</shortName>
        <ecNumber evidence="1">6.3.5.3</ecNumber>
    </recommendedName>
    <alternativeName>
        <fullName evidence="1">Formylglycinamide ribonucleotide amidotransferase subunit II</fullName>
        <shortName evidence="1">FGAR amidotransferase II</shortName>
        <shortName evidence="1">FGAR-AT II</shortName>
    </alternativeName>
    <alternativeName>
        <fullName evidence="1">Glutamine amidotransferase PurL</fullName>
    </alternativeName>
    <alternativeName>
        <fullName evidence="1">Phosphoribosylformylglycinamidine synthase subunit II</fullName>
    </alternativeName>
</protein>
<comment type="function">
    <text evidence="1">Part of the phosphoribosylformylglycinamidine synthase complex involved in the purines biosynthetic pathway. Catalyzes the ATP-dependent conversion of formylglycinamide ribonucleotide (FGAR) and glutamine to yield formylglycinamidine ribonucleotide (FGAM) and glutamate. The FGAM synthase complex is composed of three subunits. PurQ produces an ammonia molecule by converting glutamine to glutamate. PurL transfers the ammonia molecule to FGAR to form FGAM in an ATP-dependent manner. PurS interacts with PurQ and PurL and is thought to assist in the transfer of the ammonia molecule from PurQ to PurL.</text>
</comment>
<comment type="catalytic activity">
    <reaction evidence="1">
        <text>N(2)-formyl-N(1)-(5-phospho-beta-D-ribosyl)glycinamide + L-glutamine + ATP + H2O = 2-formamido-N(1)-(5-O-phospho-beta-D-ribosyl)acetamidine + L-glutamate + ADP + phosphate + H(+)</text>
        <dbReference type="Rhea" id="RHEA:17129"/>
        <dbReference type="ChEBI" id="CHEBI:15377"/>
        <dbReference type="ChEBI" id="CHEBI:15378"/>
        <dbReference type="ChEBI" id="CHEBI:29985"/>
        <dbReference type="ChEBI" id="CHEBI:30616"/>
        <dbReference type="ChEBI" id="CHEBI:43474"/>
        <dbReference type="ChEBI" id="CHEBI:58359"/>
        <dbReference type="ChEBI" id="CHEBI:147286"/>
        <dbReference type="ChEBI" id="CHEBI:147287"/>
        <dbReference type="ChEBI" id="CHEBI:456216"/>
        <dbReference type="EC" id="6.3.5.3"/>
    </reaction>
</comment>
<comment type="pathway">
    <text evidence="1">Purine metabolism; IMP biosynthesis via de novo pathway; 5-amino-1-(5-phospho-D-ribosyl)imidazole from N(2)-formyl-N(1)-(5-phospho-D-ribosyl)glycinamide: step 1/2.</text>
</comment>
<comment type="subunit">
    <text evidence="1">Monomer. Part of the FGAM synthase complex composed of 1 PurL, 1 PurQ and 2 PurS subunits.</text>
</comment>
<comment type="subcellular location">
    <subcellularLocation>
        <location evidence="1">Cytoplasm</location>
    </subcellularLocation>
</comment>
<comment type="similarity">
    <text evidence="1">Belongs to the FGAMS family.</text>
</comment>
<proteinExistence type="inferred from homology"/>
<organism>
    <name type="scientific">Bacillus anthracis (strain A0248)</name>
    <dbReference type="NCBI Taxonomy" id="592021"/>
    <lineage>
        <taxon>Bacteria</taxon>
        <taxon>Bacillati</taxon>
        <taxon>Bacillota</taxon>
        <taxon>Bacilli</taxon>
        <taxon>Bacillales</taxon>
        <taxon>Bacillaceae</taxon>
        <taxon>Bacillus</taxon>
        <taxon>Bacillus cereus group</taxon>
    </lineage>
</organism>
<reference key="1">
    <citation type="submission" date="2009-04" db="EMBL/GenBank/DDBJ databases">
        <title>Genome sequence of Bacillus anthracis A0248.</title>
        <authorList>
            <person name="Dodson R.J."/>
            <person name="Munk A.C."/>
            <person name="Bruce D."/>
            <person name="Detter C."/>
            <person name="Tapia R."/>
            <person name="Sutton G."/>
            <person name="Sims D."/>
            <person name="Brettin T."/>
        </authorList>
    </citation>
    <scope>NUCLEOTIDE SEQUENCE [LARGE SCALE GENOMIC DNA]</scope>
    <source>
        <strain>A0248</strain>
    </source>
</reference>
<name>PURL_BACAA</name>
<sequence length="739" mass="80175">MSLMLEPNPTQIKEERIYAEMGLTDEEFAMVEKILGRLPNYTETGLFSVMWSEHCSYKNSKPVLRKFPTTGERVLQGPGEGAGIVDIGDNQAVVFKMESHNHPSAIEPYQGAATGVGGIIRDVFSMGARPVALLNSLRFGELQSPRVKYLFEEVVAGIAGYGNCIGIPTVGGEVQFDPCYEGNPLVNAMCVGLINHEDIKKGQAHGAGNTVMYVGASTGRDGIHGATFASEELSESSEAKRPAVQVGDPFMEKLLIEACLELIQSDALVGIQDMGAAGLTSSSAEMASKAGMGIEMYLDDVPQRETGMTPYEMMLSESQERMLIVVKKGREQEIVDLFEKYGLAAVTMGKVTEDKMLRLFHKGEMVAEVPADALAEEAPIYHKPSKEAAYFAEFQQMKMETPKVENYKETLFALLQQPTIASKEWVYDQYDYQVRTSTVVTPGSDAAVVRVRGTEKGLAMTTDCNSRYIYLDPEVGGKIAVAEAARNIVCSGGEPLAITDCLNFGNPEKPEIFWQIEKSVDGMSEACRTLQTPVIGGNVSMYNERSGEAVYPTPTVGMVGLVHDLKHVTTQEFKQAGDLVYVIGETKAEFGGSELQKMLHGKIFGQSPSIDLDVELKRQKQVLAAIQAGLVQSAHDVAEGGLAVAISESAIGANGLGATVKLDGEATAALFAESQSRFVITVKRENKEAFEKAVEAIQVGEVTNTNEVTIHNEENEVLLTANVDEMRKAWKGAIPCLLK</sequence>